<proteinExistence type="inferred from homology"/>
<organism>
    <name type="scientific">Human bocavirus 2</name>
    <name type="common">HBoV2</name>
    <name type="synonym">Human bocavirus type 2</name>
    <dbReference type="NCBI Taxonomy" id="573977"/>
    <lineage>
        <taxon>Viruses</taxon>
        <taxon>Monodnaviria</taxon>
        <taxon>Shotokuvirae</taxon>
        <taxon>Cossaviricota</taxon>
        <taxon>Quintoviricetes</taxon>
        <taxon>Piccovirales</taxon>
        <taxon>Parvoviridae</taxon>
        <taxon>Parvovirinae</taxon>
        <taxon>Bocaparvovirus</taxon>
        <taxon>Bocaparvovirus primate2</taxon>
    </lineage>
</organism>
<sequence>MSSESMKNKHRNSKRTPSPLQKERRRNWESHKSRSRSPIRRHGEKNLEYAHHSNQENRQSSYTALKTSDQATKTKEKTSGGNRTNPYTVFSQHRANHSDAPGWCGFYWHSTRLARDGTNCIFNEMKQEFQELQINGKITWDNARELLFSQKKKLDQKYRNMLYHFRHSPDCPRCDYWDNVYRRHLAHVSSQESEEVTDEEMLSAVESMDTNASN</sequence>
<comment type="function">
    <text evidence="1">Required for the expression of the capsid proteins. Performs the splicing and internal polyadenylation of the viral capsid-encoding mRNA precursor, which allows its maturation and expression. Transactivates the viral promoter.</text>
</comment>
<comment type="subcellular location">
    <subcellularLocation>
        <location evidence="1">Host nucleus</location>
    </subcellularLocation>
</comment>
<comment type="similarity">
    <text evidence="3">Belongs to the Bocaparvovirus Non-structural protein NP-1 family.</text>
</comment>
<dbReference type="EMBL" id="FJ170278">
    <property type="protein sequence ID" value="ACJ38932.1"/>
    <property type="molecule type" value="Genomic_DNA"/>
</dbReference>
<dbReference type="EMBL" id="GQ200737">
    <property type="protein sequence ID" value="ACS74734.1"/>
    <property type="molecule type" value="Genomic_DNA"/>
</dbReference>
<dbReference type="RefSeq" id="YP_002586774.1">
    <property type="nucleotide sequence ID" value="NC_012042.1"/>
</dbReference>
<dbReference type="KEGG" id="vg:7755623"/>
<dbReference type="Proteomes" id="UP000098880">
    <property type="component" value="Genome"/>
</dbReference>
<dbReference type="Proteomes" id="UP000150026">
    <property type="component" value="Segment"/>
</dbReference>
<dbReference type="GO" id="GO:0042025">
    <property type="term" value="C:host cell nucleus"/>
    <property type="evidence" value="ECO:0007669"/>
    <property type="project" value="UniProtKB-SubCell"/>
</dbReference>
<dbReference type="GO" id="GO:0033120">
    <property type="term" value="P:positive regulation of RNA splicing"/>
    <property type="evidence" value="ECO:0000315"/>
    <property type="project" value="CACAO"/>
</dbReference>
<dbReference type="GO" id="GO:0031564">
    <property type="term" value="P:transcription antitermination"/>
    <property type="evidence" value="ECO:0000315"/>
    <property type="project" value="CACAO"/>
</dbReference>
<dbReference type="InterPro" id="IPR021075">
    <property type="entry name" value="Bocavirus_NP1"/>
</dbReference>
<dbReference type="Pfam" id="PF11733">
    <property type="entry name" value="NP1-WLL"/>
    <property type="match status" value="1"/>
</dbReference>
<evidence type="ECO:0000250" key="1">
    <source>
        <dbReference type="UniProtKB" id="Q3YPH5"/>
    </source>
</evidence>
<evidence type="ECO:0000256" key="2">
    <source>
        <dbReference type="SAM" id="MobiDB-lite"/>
    </source>
</evidence>
<evidence type="ECO:0000305" key="3"/>
<evidence type="ECO:0000312" key="4">
    <source>
        <dbReference type="EMBL" id="ACS74734.1"/>
    </source>
</evidence>
<keyword id="KW-0010">Activator</keyword>
<keyword id="KW-1048">Host nucleus</keyword>
<keyword id="KW-0804">Transcription</keyword>
<keyword id="KW-0805">Transcription regulation</keyword>
<name>NP1_HBOC2</name>
<gene>
    <name type="primary">NP1</name>
    <name type="synonym">NP-1</name>
</gene>
<protein>
    <recommendedName>
        <fullName>Non-structural protein NP-1</fullName>
        <shortName>NP1</shortName>
    </recommendedName>
</protein>
<accession>B9UYK6</accession>
<accession>C6KF53</accession>
<feature type="chain" id="PRO_0000445638" description="Non-structural protein NP-1">
    <location>
        <begin position="1"/>
        <end position="214"/>
    </location>
</feature>
<feature type="region of interest" description="Disordered" evidence="2">
    <location>
        <begin position="1"/>
        <end position="87"/>
    </location>
</feature>
<feature type="region of interest" description="Disordered" evidence="2">
    <location>
        <begin position="192"/>
        <end position="214"/>
    </location>
</feature>
<feature type="compositionally biased region" description="Basic residues" evidence="2">
    <location>
        <begin position="33"/>
        <end position="43"/>
    </location>
</feature>
<feature type="compositionally biased region" description="Basic and acidic residues" evidence="2">
    <location>
        <begin position="44"/>
        <end position="55"/>
    </location>
</feature>
<feature type="compositionally biased region" description="Polar residues" evidence="2">
    <location>
        <begin position="56"/>
        <end position="71"/>
    </location>
</feature>
<feature type="compositionally biased region" description="Acidic residues" evidence="2">
    <location>
        <begin position="192"/>
        <end position="201"/>
    </location>
</feature>
<reference key="1">
    <citation type="journal article" date="2009" name="J. Infect. Dis.">
        <title>A newly identified bocavirus species in human stool.</title>
        <authorList>
            <person name="Kapoor A."/>
            <person name="Slikas E."/>
            <person name="Simmonds P."/>
            <person name="Chieochansin T."/>
            <person name="Naeem A."/>
            <person name="Shaukat S."/>
            <person name="Alam M.M."/>
            <person name="Sharif S."/>
            <person name="Angez M."/>
            <person name="Zaidi S."/>
            <person name="Delwart E."/>
        </authorList>
    </citation>
    <scope>NUCLEOTIDE SEQUENCE [LARGE SCALE GENOMIC DNA]</scope>
    <source>
        <strain>PK-5510</strain>
    </source>
</reference>
<reference key="2">
    <citation type="journal article" date="2010" name="Virology">
        <title>Characterization of the gene expression profile of human bocavirus.</title>
        <authorList>
            <person name="Chen A.Y."/>
            <person name="Cheng F."/>
            <person name="Lou S."/>
            <person name="Luo Y."/>
            <person name="Liu Z."/>
            <person name="Delwart E."/>
            <person name="Pintel D."/>
            <person name="Qiu J."/>
        </authorList>
    </citation>
    <scope>NUCLEOTIDE SEQUENCE [LARGE SCALE GENOMIC DNA]</scope>
    <source>
        <strain evidence="4">KU1</strain>
    </source>
</reference>
<organismHost>
    <name type="scientific">Homo sapiens</name>
    <name type="common">Human</name>
    <dbReference type="NCBI Taxonomy" id="9606"/>
</organismHost>